<keyword id="KW-0131">Cell cycle</keyword>
<keyword id="KW-0227">DNA damage</keyword>
<keyword id="KW-0234">DNA repair</keyword>
<keyword id="KW-0236">DNA replication inhibitor</keyword>
<keyword id="KW-0469">Meiosis</keyword>
<keyword id="KW-0539">Nucleus</keyword>
<keyword id="KW-1185">Reference proteome</keyword>
<feature type="chain" id="PRO_0000301743" description="Topoisomerase 1-associated factor 1">
    <location>
        <begin position="1"/>
        <end position="1177"/>
    </location>
</feature>
<feature type="region of interest" description="Disordered" evidence="2">
    <location>
        <begin position="575"/>
        <end position="597"/>
    </location>
</feature>
<feature type="region of interest" description="Disordered" evidence="2">
    <location>
        <begin position="791"/>
        <end position="815"/>
    </location>
</feature>
<feature type="region of interest" description="Disordered" evidence="2">
    <location>
        <begin position="874"/>
        <end position="1001"/>
    </location>
</feature>
<feature type="region of interest" description="Disordered" evidence="2">
    <location>
        <begin position="1021"/>
        <end position="1177"/>
    </location>
</feature>
<feature type="compositionally biased region" description="Acidic residues" evidence="2">
    <location>
        <begin position="583"/>
        <end position="597"/>
    </location>
</feature>
<feature type="compositionally biased region" description="Basic and acidic residues" evidence="2">
    <location>
        <begin position="791"/>
        <end position="803"/>
    </location>
</feature>
<feature type="compositionally biased region" description="Acidic residues" evidence="2">
    <location>
        <begin position="911"/>
        <end position="921"/>
    </location>
</feature>
<feature type="compositionally biased region" description="Acidic residues" evidence="2">
    <location>
        <begin position="954"/>
        <end position="963"/>
    </location>
</feature>
<feature type="compositionally biased region" description="Basic and acidic residues" evidence="2">
    <location>
        <begin position="981"/>
        <end position="991"/>
    </location>
</feature>
<feature type="compositionally biased region" description="Polar residues" evidence="2">
    <location>
        <begin position="1086"/>
        <end position="1096"/>
    </location>
</feature>
<feature type="compositionally biased region" description="Acidic residues" evidence="2">
    <location>
        <begin position="1108"/>
        <end position="1118"/>
    </location>
</feature>
<feature type="compositionally biased region" description="Acidic residues" evidence="2">
    <location>
        <begin position="1146"/>
        <end position="1155"/>
    </location>
</feature>
<comment type="function">
    <text evidence="1">Forms a fork protection complex (FPC) with csm3 and which is required for chromosome segregation during meiosis and DNA damage repair. FPC coordinates leading and lagging strand synthesis and moves with the replication fork. FPC stabilizes replication forks in a configuration that is recognized by replication checkpoint sensors (By similarity).</text>
</comment>
<comment type="subunit">
    <text evidence="1">Component of the fork protection complex (FPC) consisting of tof1 and csm3.</text>
</comment>
<comment type="subcellular location">
    <subcellularLocation>
        <location evidence="1">Nucleus</location>
    </subcellularLocation>
</comment>
<comment type="similarity">
    <text evidence="3">Belongs to the timeless family.</text>
</comment>
<proteinExistence type="inferred from homology"/>
<reference key="1">
    <citation type="journal article" date="2008" name="PLoS Genet.">
        <title>Genomic islands in the pathogenic filamentous fungus Aspergillus fumigatus.</title>
        <authorList>
            <person name="Fedorova N.D."/>
            <person name="Khaldi N."/>
            <person name="Joardar V.S."/>
            <person name="Maiti R."/>
            <person name="Amedeo P."/>
            <person name="Anderson M.J."/>
            <person name="Crabtree J."/>
            <person name="Silva J.C."/>
            <person name="Badger J.H."/>
            <person name="Albarraq A."/>
            <person name="Angiuoli S."/>
            <person name="Bussey H."/>
            <person name="Bowyer P."/>
            <person name="Cotty P.J."/>
            <person name="Dyer P.S."/>
            <person name="Egan A."/>
            <person name="Galens K."/>
            <person name="Fraser-Liggett C.M."/>
            <person name="Haas B.J."/>
            <person name="Inman J.M."/>
            <person name="Kent R."/>
            <person name="Lemieux S."/>
            <person name="Malavazi I."/>
            <person name="Orvis J."/>
            <person name="Roemer T."/>
            <person name="Ronning C.M."/>
            <person name="Sundaram J.P."/>
            <person name="Sutton G."/>
            <person name="Turner G."/>
            <person name="Venter J.C."/>
            <person name="White O.R."/>
            <person name="Whitty B.R."/>
            <person name="Youngman P."/>
            <person name="Wolfe K.H."/>
            <person name="Goldman G.H."/>
            <person name="Wortman J.R."/>
            <person name="Jiang B."/>
            <person name="Denning D.W."/>
            <person name="Nierman W.C."/>
        </authorList>
    </citation>
    <scope>NUCLEOTIDE SEQUENCE [LARGE SCALE GENOMIC DNA]</scope>
    <source>
        <strain>ATCC 1020 / DSM 3700 / CBS 544.65 / FGSC A1164 / JCM 1740 / NRRL 181 / WB 181</strain>
    </source>
</reference>
<protein>
    <recommendedName>
        <fullName>Topoisomerase 1-associated factor 1</fullName>
    </recommendedName>
</protein>
<organism>
    <name type="scientific">Neosartorya fischeri (strain ATCC 1020 / DSM 3700 / CBS 544.65 / FGSC A1164 / JCM 1740 / NRRL 181 / WB 181)</name>
    <name type="common">Aspergillus fischerianus</name>
    <dbReference type="NCBI Taxonomy" id="331117"/>
    <lineage>
        <taxon>Eukaryota</taxon>
        <taxon>Fungi</taxon>
        <taxon>Dikarya</taxon>
        <taxon>Ascomycota</taxon>
        <taxon>Pezizomycotina</taxon>
        <taxon>Eurotiomycetes</taxon>
        <taxon>Eurotiomycetidae</taxon>
        <taxon>Eurotiales</taxon>
        <taxon>Aspergillaceae</taxon>
        <taxon>Aspergillus</taxon>
        <taxon>Aspergillus subgen. Fumigati</taxon>
    </lineage>
</organism>
<evidence type="ECO:0000250" key="1"/>
<evidence type="ECO:0000256" key="2">
    <source>
        <dbReference type="SAM" id="MobiDB-lite"/>
    </source>
</evidence>
<evidence type="ECO:0000305" key="3"/>
<name>TOF1_NEOFI</name>
<gene>
    <name type="primary">tof1</name>
    <name type="ORF">NFIA_028970</name>
</gene>
<sequence length="1177" mass="134953">MDEEGAPLSESVQVVDPDVRAHVYSLVTALGGFNGESADRYVLGDDALACLRDIKRWLKLYDEKNNRMDVARCLGEANLVNGDLLPILTLWSTSGQKSKHMSRIALACLELLVPLTWPLEVPSKMTVNHHRHTPYLQQAQVLYKRGILSHGSDSILRTIIRIGLPSMAVPRSERTTRDEGILKLMLYFLRNIAVISPNARLAAEGDEEETSRSATINAFQNQDAFALLLTMCSNVGEDFSLQDVVLLEILFHIVKGVNVEKLFMNDAQRKAKRTDELGELLQKESSLRREYAKNAPTRHGRFGTMIWVKRDDAKVSTVSGQDVLKDSQTTLHKMDQSKKWNKPQIRRRAAEVTANNDFNTPVNLNSTATKNLRMFVEEFLDSGFNPLFTHVRKAIEREADRVLDINTRQFFYTVAWFLEAERVRRAHQREKRHLGDKSLNEIEPDSFALVASVLNQETFVFLNRSMQYSYDNKDVEDLTAEMRCFTQILLTVQEMAQSPLEEDQEIADNIQNRIFYEETTHDRIIAIVRGYKDQGFGYLDACTELAHVFLKMLEHYSKENVDMHIRSRRRAKRKAKQAKQADIEGDDEEQASEEEDLMDAERISKERKFDFKRFAAKFCNQSCVDTFIAFTKYYKELNVDQLKRAHRYFYRIAFKQEMSVLLFRLDIINLFYRMIKGPGALDSNKPIFKEWEELVRQIIRRMVKKIDQRPALITELLFSKINSTVFYLEYGHEKQTISASKRPPAELEVDPREAKTTDEKIKIVVHVMVKDEHTDLVKWVSDVLNSAADEREAWESQEQHSEGQKAPNPMIPVKSNNESCQKAMFSNAKLRLLMTLVRFERLGMEDVPGASWIVPSSLTSQDLRHTRSMIEQCLTEPVTESSDRDLSQLIRRKSGNNTRRDRDDQTADVDFGSDSEGDDNVPDGPLFPPNPRSRASALEQLKKQRKKRRKQAGEEEEPDEEDLEGRRRARLENALARQAKIKSDLYIHASDEQTDEEADQEFFRLEEQRRKEQAERIRKALLHGVVEEASENSRKKGSGRKRQSDQHTASTADSQSKRQRRQQRTGGLDDDDDLVMTGTDARSPDSLGQGSPSLQGANDVEDTPVTSEENELDFDDDLAFSRNRNRDKVLSAENDDSDTEPPAPDTIDEDDDDEAAPVAAPPRRRMRAGFVIESDSE</sequence>
<accession>A1D9I5</accession>
<dbReference type="EMBL" id="DS027693">
    <property type="protein sequence ID" value="EAW20466.1"/>
    <property type="molecule type" value="Genomic_DNA"/>
</dbReference>
<dbReference type="RefSeq" id="XP_001262363.1">
    <property type="nucleotide sequence ID" value="XM_001262362.1"/>
</dbReference>
<dbReference type="SMR" id="A1D9I5"/>
<dbReference type="STRING" id="331117.A1D9I5"/>
<dbReference type="EnsemblFungi" id="EAW20466">
    <property type="protein sequence ID" value="EAW20466"/>
    <property type="gene ID" value="NFIA_028970"/>
</dbReference>
<dbReference type="GeneID" id="4589179"/>
<dbReference type="KEGG" id="nfi:NFIA_028970"/>
<dbReference type="VEuPathDB" id="FungiDB:NFIA_028970"/>
<dbReference type="eggNOG" id="KOG1974">
    <property type="taxonomic scope" value="Eukaryota"/>
</dbReference>
<dbReference type="HOGENOM" id="CLU_004390_0_0_1"/>
<dbReference type="OMA" id="VNHHRHT"/>
<dbReference type="OrthoDB" id="310853at2759"/>
<dbReference type="Proteomes" id="UP000006702">
    <property type="component" value="Unassembled WGS sequence"/>
</dbReference>
<dbReference type="GO" id="GO:0031298">
    <property type="term" value="C:replication fork protection complex"/>
    <property type="evidence" value="ECO:0007669"/>
    <property type="project" value="TreeGrafter"/>
</dbReference>
<dbReference type="GO" id="GO:0003677">
    <property type="term" value="F:DNA binding"/>
    <property type="evidence" value="ECO:0007669"/>
    <property type="project" value="TreeGrafter"/>
</dbReference>
<dbReference type="GO" id="GO:0006281">
    <property type="term" value="P:DNA repair"/>
    <property type="evidence" value="ECO:0007669"/>
    <property type="project" value="UniProtKB-KW"/>
</dbReference>
<dbReference type="GO" id="GO:0000076">
    <property type="term" value="P:DNA replication checkpoint signaling"/>
    <property type="evidence" value="ECO:0007669"/>
    <property type="project" value="TreeGrafter"/>
</dbReference>
<dbReference type="GO" id="GO:0051321">
    <property type="term" value="P:meiotic cell cycle"/>
    <property type="evidence" value="ECO:0007669"/>
    <property type="project" value="UniProtKB-KW"/>
</dbReference>
<dbReference type="GO" id="GO:0043111">
    <property type="term" value="P:replication fork arrest"/>
    <property type="evidence" value="ECO:0007669"/>
    <property type="project" value="TreeGrafter"/>
</dbReference>
<dbReference type="InterPro" id="IPR044998">
    <property type="entry name" value="Timeless"/>
</dbReference>
<dbReference type="InterPro" id="IPR006906">
    <property type="entry name" value="Timeless_N"/>
</dbReference>
<dbReference type="PANTHER" id="PTHR22940:SF4">
    <property type="entry name" value="PROTEIN TIMELESS HOMOLOG"/>
    <property type="match status" value="1"/>
</dbReference>
<dbReference type="PANTHER" id="PTHR22940">
    <property type="entry name" value="TIMEOUT/TIMELESS-2"/>
    <property type="match status" value="1"/>
</dbReference>
<dbReference type="Pfam" id="PF04821">
    <property type="entry name" value="TIMELESS"/>
    <property type="match status" value="1"/>
</dbReference>